<comment type="subcellular location">
    <subcellularLocation>
        <location evidence="2 3">Mitochondrion</location>
    </subcellularLocation>
</comment>
<keyword id="KW-0129">CBS domain</keyword>
<keyword id="KW-0903">Direct protein sequencing</keyword>
<keyword id="KW-0496">Mitochondrion</keyword>
<keyword id="KW-1185">Reference proteome</keyword>
<keyword id="KW-0677">Repeat</keyword>
<keyword id="KW-0809">Transit peptide</keyword>
<accession>Q9LEV3</accession>
<proteinExistence type="evidence at protein level"/>
<organism>
    <name type="scientific">Arabidopsis thaliana</name>
    <name type="common">Mouse-ear cress</name>
    <dbReference type="NCBI Taxonomy" id="3702"/>
    <lineage>
        <taxon>Eukaryota</taxon>
        <taxon>Viridiplantae</taxon>
        <taxon>Streptophyta</taxon>
        <taxon>Embryophyta</taxon>
        <taxon>Tracheophyta</taxon>
        <taxon>Spermatophyta</taxon>
        <taxon>Magnoliopsida</taxon>
        <taxon>eudicotyledons</taxon>
        <taxon>Gunneridae</taxon>
        <taxon>Pentapetalae</taxon>
        <taxon>rosids</taxon>
        <taxon>malvids</taxon>
        <taxon>Brassicales</taxon>
        <taxon>Brassicaceae</taxon>
        <taxon>Camelineae</taxon>
        <taxon>Arabidopsis</taxon>
    </lineage>
</organism>
<feature type="transit peptide" description="Mitochondrion" evidence="2">
    <location>
        <begin position="1"/>
        <end position="39"/>
    </location>
</feature>
<feature type="chain" id="PRO_0000022626" description="CBS domain-containing protein CBSX3, mitochondrial">
    <location>
        <begin position="40"/>
        <end position="206"/>
    </location>
</feature>
<feature type="domain" description="CBS 1" evidence="1">
    <location>
        <begin position="61"/>
        <end position="127"/>
    </location>
</feature>
<feature type="domain" description="CBS 2" evidence="1">
    <location>
        <begin position="136"/>
        <end position="194"/>
    </location>
</feature>
<evidence type="ECO:0000255" key="1">
    <source>
        <dbReference type="PROSITE-ProRule" id="PRU00703"/>
    </source>
</evidence>
<evidence type="ECO:0000269" key="2">
    <source>
    </source>
</evidence>
<evidence type="ECO:0000269" key="3">
    <source>
    </source>
</evidence>
<protein>
    <recommendedName>
        <fullName>CBS domain-containing protein CBSX3, mitochondrial</fullName>
    </recommendedName>
</protein>
<reference key="1">
    <citation type="journal article" date="2000" name="Nature">
        <title>Sequence and analysis of chromosome 5 of the plant Arabidopsis thaliana.</title>
        <authorList>
            <person name="Tabata S."/>
            <person name="Kaneko T."/>
            <person name="Nakamura Y."/>
            <person name="Kotani H."/>
            <person name="Kato T."/>
            <person name="Asamizu E."/>
            <person name="Miyajima N."/>
            <person name="Sasamoto S."/>
            <person name="Kimura T."/>
            <person name="Hosouchi T."/>
            <person name="Kawashima K."/>
            <person name="Kohara M."/>
            <person name="Matsumoto M."/>
            <person name="Matsuno A."/>
            <person name="Muraki A."/>
            <person name="Nakayama S."/>
            <person name="Nakazaki N."/>
            <person name="Naruo K."/>
            <person name="Okumura S."/>
            <person name="Shinpo S."/>
            <person name="Takeuchi C."/>
            <person name="Wada T."/>
            <person name="Watanabe A."/>
            <person name="Yamada M."/>
            <person name="Yasuda M."/>
            <person name="Sato S."/>
            <person name="de la Bastide M."/>
            <person name="Huang E."/>
            <person name="Spiegel L."/>
            <person name="Gnoj L."/>
            <person name="O'Shaughnessy A."/>
            <person name="Preston R."/>
            <person name="Habermann K."/>
            <person name="Murray J."/>
            <person name="Johnson D."/>
            <person name="Rohlfing T."/>
            <person name="Nelson J."/>
            <person name="Stoneking T."/>
            <person name="Pepin K."/>
            <person name="Spieth J."/>
            <person name="Sekhon M."/>
            <person name="Armstrong J."/>
            <person name="Becker M."/>
            <person name="Belter E."/>
            <person name="Cordum H."/>
            <person name="Cordes M."/>
            <person name="Courtney L."/>
            <person name="Courtney W."/>
            <person name="Dante M."/>
            <person name="Du H."/>
            <person name="Edwards J."/>
            <person name="Fryman J."/>
            <person name="Haakensen B."/>
            <person name="Lamar E."/>
            <person name="Latreille P."/>
            <person name="Leonard S."/>
            <person name="Meyer R."/>
            <person name="Mulvaney E."/>
            <person name="Ozersky P."/>
            <person name="Riley A."/>
            <person name="Strowmatt C."/>
            <person name="Wagner-McPherson C."/>
            <person name="Wollam A."/>
            <person name="Yoakum M."/>
            <person name="Bell M."/>
            <person name="Dedhia N."/>
            <person name="Parnell L."/>
            <person name="Shah R."/>
            <person name="Rodriguez M."/>
            <person name="Hoon See L."/>
            <person name="Vil D."/>
            <person name="Baker J."/>
            <person name="Kirchoff K."/>
            <person name="Toth K."/>
            <person name="King L."/>
            <person name="Bahret A."/>
            <person name="Miller B."/>
            <person name="Marra M.A."/>
            <person name="Martienssen R."/>
            <person name="McCombie W.R."/>
            <person name="Wilson R.K."/>
            <person name="Murphy G."/>
            <person name="Bancroft I."/>
            <person name="Volckaert G."/>
            <person name="Wambutt R."/>
            <person name="Duesterhoeft A."/>
            <person name="Stiekema W."/>
            <person name="Pohl T."/>
            <person name="Entian K.-D."/>
            <person name="Terryn N."/>
            <person name="Hartley N."/>
            <person name="Bent E."/>
            <person name="Johnson S."/>
            <person name="Langham S.-A."/>
            <person name="McCullagh B."/>
            <person name="Robben J."/>
            <person name="Grymonprez B."/>
            <person name="Zimmermann W."/>
            <person name="Ramsperger U."/>
            <person name="Wedler H."/>
            <person name="Balke K."/>
            <person name="Wedler E."/>
            <person name="Peters S."/>
            <person name="van Staveren M."/>
            <person name="Dirkse W."/>
            <person name="Mooijman P."/>
            <person name="Klein Lankhorst R."/>
            <person name="Weitzenegger T."/>
            <person name="Bothe G."/>
            <person name="Rose M."/>
            <person name="Hauf J."/>
            <person name="Berneiser S."/>
            <person name="Hempel S."/>
            <person name="Feldpausch M."/>
            <person name="Lamberth S."/>
            <person name="Villarroel R."/>
            <person name="Gielen J."/>
            <person name="Ardiles W."/>
            <person name="Bents O."/>
            <person name="Lemcke K."/>
            <person name="Kolesov G."/>
            <person name="Mayer K.F.X."/>
            <person name="Rudd S."/>
            <person name="Schoof H."/>
            <person name="Schueller C."/>
            <person name="Zaccaria P."/>
            <person name="Mewes H.-W."/>
            <person name="Bevan M."/>
            <person name="Fransz P.F."/>
        </authorList>
    </citation>
    <scope>NUCLEOTIDE SEQUENCE [LARGE SCALE GENOMIC DNA]</scope>
    <source>
        <strain>cv. Columbia</strain>
    </source>
</reference>
<reference key="2">
    <citation type="journal article" date="2017" name="Plant J.">
        <title>Araport11: a complete reannotation of the Arabidopsis thaliana reference genome.</title>
        <authorList>
            <person name="Cheng C.Y."/>
            <person name="Krishnakumar V."/>
            <person name="Chan A.P."/>
            <person name="Thibaud-Nissen F."/>
            <person name="Schobel S."/>
            <person name="Town C.D."/>
        </authorList>
    </citation>
    <scope>GENOME REANNOTATION</scope>
    <source>
        <strain>cv. Columbia</strain>
    </source>
</reference>
<reference key="3">
    <citation type="journal article" date="2003" name="Science">
        <title>Empirical analysis of transcriptional activity in the Arabidopsis genome.</title>
        <authorList>
            <person name="Yamada K."/>
            <person name="Lim J."/>
            <person name="Dale J.M."/>
            <person name="Chen H."/>
            <person name="Shinn P."/>
            <person name="Palm C.J."/>
            <person name="Southwick A.M."/>
            <person name="Wu H.C."/>
            <person name="Kim C.J."/>
            <person name="Nguyen M."/>
            <person name="Pham P.K."/>
            <person name="Cheuk R.F."/>
            <person name="Karlin-Newmann G."/>
            <person name="Liu S.X."/>
            <person name="Lam B."/>
            <person name="Sakano H."/>
            <person name="Wu T."/>
            <person name="Yu G."/>
            <person name="Miranda M."/>
            <person name="Quach H.L."/>
            <person name="Tripp M."/>
            <person name="Chang C.H."/>
            <person name="Lee J.M."/>
            <person name="Toriumi M.J."/>
            <person name="Chan M.M."/>
            <person name="Tang C.C."/>
            <person name="Onodera C.S."/>
            <person name="Deng J.M."/>
            <person name="Akiyama K."/>
            <person name="Ansari Y."/>
            <person name="Arakawa T."/>
            <person name="Banh J."/>
            <person name="Banno F."/>
            <person name="Bowser L."/>
            <person name="Brooks S.Y."/>
            <person name="Carninci P."/>
            <person name="Chao Q."/>
            <person name="Choy N."/>
            <person name="Enju A."/>
            <person name="Goldsmith A.D."/>
            <person name="Gurjal M."/>
            <person name="Hansen N.F."/>
            <person name="Hayashizaki Y."/>
            <person name="Johnson-Hopson C."/>
            <person name="Hsuan V.W."/>
            <person name="Iida K."/>
            <person name="Karnes M."/>
            <person name="Khan S."/>
            <person name="Koesema E."/>
            <person name="Ishida J."/>
            <person name="Jiang P.X."/>
            <person name="Jones T."/>
            <person name="Kawai J."/>
            <person name="Kamiya A."/>
            <person name="Meyers C."/>
            <person name="Nakajima M."/>
            <person name="Narusaka M."/>
            <person name="Seki M."/>
            <person name="Sakurai T."/>
            <person name="Satou M."/>
            <person name="Tamse R."/>
            <person name="Vaysberg M."/>
            <person name="Wallender E.K."/>
            <person name="Wong C."/>
            <person name="Yamamura Y."/>
            <person name="Yuan S."/>
            <person name="Shinozaki K."/>
            <person name="Davis R.W."/>
            <person name="Theologis A."/>
            <person name="Ecker J.R."/>
        </authorList>
    </citation>
    <scope>NUCLEOTIDE SEQUENCE [LARGE SCALE MRNA]</scope>
    <source>
        <strain>cv. Columbia</strain>
    </source>
</reference>
<reference key="4">
    <citation type="journal article" date="2001" name="Plant Physiol.">
        <title>Proteomic approach to identify novel mitochondrial proteins in Arabidopsis.</title>
        <authorList>
            <person name="Kruft V."/>
            <person name="Eubel H."/>
            <person name="Jaensch L."/>
            <person name="Werhahn W."/>
            <person name="Braun H.-P."/>
        </authorList>
    </citation>
    <scope>PROTEIN SEQUENCE OF 40-54</scope>
    <scope>SUBCELLULAR LOCATION</scope>
    <source>
        <tissue>Leaf</tissue>
        <tissue>Stem</tissue>
    </source>
</reference>
<reference key="5">
    <citation type="journal article" date="2004" name="Plant Cell">
        <title>Experimental analysis of the Arabidopsis mitochondrial proteome highlights signaling and regulatory components, provides assessment of targeting prediction programs, and indicates plant-specific mitochondrial proteins.</title>
        <authorList>
            <person name="Heazlewood J.L."/>
            <person name="Tonti-Filippini J.S."/>
            <person name="Gout A.M."/>
            <person name="Day D.A."/>
            <person name="Whelan J."/>
            <person name="Millar A.H."/>
        </authorList>
    </citation>
    <scope>IDENTIFICATION BY MASS SPECTROMETRY</scope>
    <scope>SUBCELLULAR LOCATION [LARGE SCALE ANALYSIS]</scope>
    <source>
        <strain>cv. Landsberg erecta</strain>
    </source>
</reference>
<reference key="6">
    <citation type="journal article" date="2007" name="Mol. Cell. Proteomics">
        <title>Multidimensional protein identification technology (MudPIT) analysis of ubiquitinated proteins in plants.</title>
        <authorList>
            <person name="Maor R."/>
            <person name="Jones A."/>
            <person name="Nuehse T.S."/>
            <person name="Studholme D.J."/>
            <person name="Peck S.C."/>
            <person name="Shirasu K."/>
        </authorList>
    </citation>
    <scope>IDENTIFICATION BY MASS SPECTROMETRY [LARGE SCALE ANALYSIS]</scope>
    <source>
        <strain>cv. Landsberg erecta</strain>
    </source>
</reference>
<reference key="7">
    <citation type="journal article" date="2009" name="BMC Genomics">
        <title>Genome wide expression analysis of CBS domain containing proteins in Arabidopsis thaliana (L.) Heynh and Oryza sativa L. reveals their developmental and stress regulation.</title>
        <authorList>
            <person name="Kushwaha H.R."/>
            <person name="Singh A.K."/>
            <person name="Sopory S.K."/>
            <person name="Singla-Pareek S.L."/>
            <person name="Pareek A."/>
        </authorList>
    </citation>
    <scope>GENE FAMILY</scope>
    <scope>NOMENCLATURE</scope>
</reference>
<gene>
    <name type="primary">CBSX3</name>
    <name type="ordered locus">At5g10860</name>
    <name type="ORF">T30N20.130</name>
</gene>
<name>CBSX3_ARATH</name>
<sequence>MQGVIRSFVSGGNVVKGSVLQHLRVINPAIQPSVFCSRSESTQPARMEESGFESTTISDVMKSKGKSADGSWLWCTTDDTVYDAVKSMTQHNVGALVVVKPGEQQALAGIITERDYLRKIIVQGRSSKSTKVGDIMTEENKLITVTPETKVLRAMQLMTDNRIRHIPVIKDKGMIGMVSIGDVVRAVVHEHREELQRLNAYIQGGY</sequence>
<dbReference type="EMBL" id="AL365234">
    <property type="protein sequence ID" value="CAB96841.1"/>
    <property type="molecule type" value="Genomic_DNA"/>
</dbReference>
<dbReference type="EMBL" id="CP002688">
    <property type="protein sequence ID" value="AED91603.1"/>
    <property type="molecule type" value="Genomic_DNA"/>
</dbReference>
<dbReference type="EMBL" id="AF361845">
    <property type="protein sequence ID" value="AAK32857.1"/>
    <property type="molecule type" value="mRNA"/>
</dbReference>
<dbReference type="EMBL" id="AY066046">
    <property type="protein sequence ID" value="AAL47413.1"/>
    <property type="molecule type" value="mRNA"/>
</dbReference>
<dbReference type="PIR" id="T50795">
    <property type="entry name" value="T50795"/>
</dbReference>
<dbReference type="RefSeq" id="NP_196647.1">
    <property type="nucleotide sequence ID" value="NM_121124.4"/>
</dbReference>
<dbReference type="SMR" id="Q9LEV3"/>
<dbReference type="BioGRID" id="16231">
    <property type="interactions" value="3"/>
</dbReference>
<dbReference type="FunCoup" id="Q9LEV3">
    <property type="interactions" value="463"/>
</dbReference>
<dbReference type="IntAct" id="Q9LEV3">
    <property type="interactions" value="1"/>
</dbReference>
<dbReference type="STRING" id="3702.Q9LEV3"/>
<dbReference type="MetOSite" id="Q9LEV3"/>
<dbReference type="SwissPalm" id="Q9LEV3"/>
<dbReference type="PaxDb" id="3702-AT5G10860.1"/>
<dbReference type="ProteomicsDB" id="223887"/>
<dbReference type="EnsemblPlants" id="AT5G10860.1">
    <property type="protein sequence ID" value="AT5G10860.1"/>
    <property type="gene ID" value="AT5G10860"/>
</dbReference>
<dbReference type="GeneID" id="830953"/>
<dbReference type="Gramene" id="AT5G10860.1">
    <property type="protein sequence ID" value="AT5G10860.1"/>
    <property type="gene ID" value="AT5G10860"/>
</dbReference>
<dbReference type="KEGG" id="ath:AT5G10860"/>
<dbReference type="Araport" id="AT5G10860"/>
<dbReference type="TAIR" id="AT5G10860">
    <property type="gene designation" value="CBSX3"/>
</dbReference>
<dbReference type="eggNOG" id="ENOG502QQ7J">
    <property type="taxonomic scope" value="Eukaryota"/>
</dbReference>
<dbReference type="HOGENOM" id="CLU_040681_3_0_1"/>
<dbReference type="InParanoid" id="Q9LEV3"/>
<dbReference type="OMA" id="QRYLPVM"/>
<dbReference type="PhylomeDB" id="Q9LEV3"/>
<dbReference type="CD-CODE" id="4299E36E">
    <property type="entry name" value="Nucleolus"/>
</dbReference>
<dbReference type="PRO" id="PR:Q9LEV3"/>
<dbReference type="Proteomes" id="UP000006548">
    <property type="component" value="Chromosome 5"/>
</dbReference>
<dbReference type="ExpressionAtlas" id="Q9LEV3">
    <property type="expression patterns" value="baseline and differential"/>
</dbReference>
<dbReference type="GO" id="GO:0005829">
    <property type="term" value="C:cytosol"/>
    <property type="evidence" value="ECO:0007005"/>
    <property type="project" value="TAIR"/>
</dbReference>
<dbReference type="GO" id="GO:0005739">
    <property type="term" value="C:mitochondrion"/>
    <property type="evidence" value="ECO:0007005"/>
    <property type="project" value="TAIR"/>
</dbReference>
<dbReference type="GO" id="GO:0005886">
    <property type="term" value="C:plasma membrane"/>
    <property type="evidence" value="ECO:0007005"/>
    <property type="project" value="TAIR"/>
</dbReference>
<dbReference type="GO" id="GO:0050897">
    <property type="term" value="F:cobalt ion binding"/>
    <property type="evidence" value="ECO:0007005"/>
    <property type="project" value="TAIR"/>
</dbReference>
<dbReference type="GO" id="GO:0045454">
    <property type="term" value="P:cell redox homeostasis"/>
    <property type="evidence" value="ECO:0000314"/>
    <property type="project" value="TAIR"/>
</dbReference>
<dbReference type="CDD" id="cd04623">
    <property type="entry name" value="CBS_pair_bac_euk"/>
    <property type="match status" value="1"/>
</dbReference>
<dbReference type="FunFam" id="3.10.580.10:FF:000017">
    <property type="entry name" value="CBS domain-containing protein CBSX3, mitochondrial"/>
    <property type="match status" value="1"/>
</dbReference>
<dbReference type="Gene3D" id="3.10.580.10">
    <property type="entry name" value="CBS-domain"/>
    <property type="match status" value="1"/>
</dbReference>
<dbReference type="InterPro" id="IPR000644">
    <property type="entry name" value="CBS_dom"/>
</dbReference>
<dbReference type="InterPro" id="IPR046342">
    <property type="entry name" value="CBS_dom_sf"/>
</dbReference>
<dbReference type="InterPro" id="IPR044725">
    <property type="entry name" value="CBSX3_CBS_dom"/>
</dbReference>
<dbReference type="InterPro" id="IPR051257">
    <property type="entry name" value="Diverse_CBS-Domain"/>
</dbReference>
<dbReference type="PANTHER" id="PTHR43080:SF2">
    <property type="entry name" value="CBS DOMAIN-CONTAINING PROTEIN"/>
    <property type="match status" value="1"/>
</dbReference>
<dbReference type="PANTHER" id="PTHR43080">
    <property type="entry name" value="CBS DOMAIN-CONTAINING PROTEIN CBSX3, MITOCHONDRIAL"/>
    <property type="match status" value="1"/>
</dbReference>
<dbReference type="Pfam" id="PF00571">
    <property type="entry name" value="CBS"/>
    <property type="match status" value="2"/>
</dbReference>
<dbReference type="SMART" id="SM00116">
    <property type="entry name" value="CBS"/>
    <property type="match status" value="2"/>
</dbReference>
<dbReference type="SUPFAM" id="SSF54631">
    <property type="entry name" value="CBS-domain pair"/>
    <property type="match status" value="1"/>
</dbReference>
<dbReference type="PROSITE" id="PS51371">
    <property type="entry name" value="CBS"/>
    <property type="match status" value="2"/>
</dbReference>